<protein>
    <recommendedName>
        <fullName evidence="1">5'-nucleotidase SurE</fullName>
        <ecNumber evidence="1">3.1.3.5</ecNumber>
    </recommendedName>
    <alternativeName>
        <fullName evidence="1">Nucleoside 5'-monophosphate phosphohydrolase</fullName>
    </alternativeName>
</protein>
<sequence length="249" mass="26377">MRILISNDDGVTAPGIAALHAALADHAECVVIAPDQDKSGAGSSLTLDRPLHPQTLANGFISLNGTPTDCVHLGLNGLLEHTPDMVVSGINLGANLGDDVLYSGTVAAALEGRFLGGTSLAFSLLSRLPDNLPTAAYIARRLVEAQSRLELPPRTVLNINIPNLPLEHIRGIQLTRLGHRARAAAPTKVVNPRGKEGYWIAVAGDAEDGGPGTDFHAVMQGYVSITPLQLDRTFNDAFERFDGWLEGVL</sequence>
<accession>Q1I654</accession>
<comment type="function">
    <text evidence="1">Nucleotidase that shows phosphatase activity on nucleoside 5'-monophosphates.</text>
</comment>
<comment type="catalytic activity">
    <reaction evidence="1">
        <text>a ribonucleoside 5'-phosphate + H2O = a ribonucleoside + phosphate</text>
        <dbReference type="Rhea" id="RHEA:12484"/>
        <dbReference type="ChEBI" id="CHEBI:15377"/>
        <dbReference type="ChEBI" id="CHEBI:18254"/>
        <dbReference type="ChEBI" id="CHEBI:43474"/>
        <dbReference type="ChEBI" id="CHEBI:58043"/>
        <dbReference type="EC" id="3.1.3.5"/>
    </reaction>
</comment>
<comment type="cofactor">
    <cofactor evidence="1">
        <name>a divalent metal cation</name>
        <dbReference type="ChEBI" id="CHEBI:60240"/>
    </cofactor>
    <text evidence="1">Binds 1 divalent metal cation per subunit.</text>
</comment>
<comment type="subcellular location">
    <subcellularLocation>
        <location evidence="1">Cytoplasm</location>
    </subcellularLocation>
</comment>
<comment type="similarity">
    <text evidence="1">Belongs to the SurE nucleotidase family.</text>
</comment>
<organism>
    <name type="scientific">Pseudomonas entomophila (strain L48)</name>
    <dbReference type="NCBI Taxonomy" id="384676"/>
    <lineage>
        <taxon>Bacteria</taxon>
        <taxon>Pseudomonadati</taxon>
        <taxon>Pseudomonadota</taxon>
        <taxon>Gammaproteobacteria</taxon>
        <taxon>Pseudomonadales</taxon>
        <taxon>Pseudomonadaceae</taxon>
        <taxon>Pseudomonas</taxon>
    </lineage>
</organism>
<proteinExistence type="inferred from homology"/>
<keyword id="KW-0963">Cytoplasm</keyword>
<keyword id="KW-0378">Hydrolase</keyword>
<keyword id="KW-0479">Metal-binding</keyword>
<keyword id="KW-0547">Nucleotide-binding</keyword>
<evidence type="ECO:0000255" key="1">
    <source>
        <dbReference type="HAMAP-Rule" id="MF_00060"/>
    </source>
</evidence>
<dbReference type="EC" id="3.1.3.5" evidence="1"/>
<dbReference type="EMBL" id="CT573326">
    <property type="protein sequence ID" value="CAK16881.1"/>
    <property type="molecule type" value="Genomic_DNA"/>
</dbReference>
<dbReference type="RefSeq" id="WP_011535252.1">
    <property type="nucleotide sequence ID" value="NC_008027.1"/>
</dbReference>
<dbReference type="SMR" id="Q1I654"/>
<dbReference type="STRING" id="384676.PSEEN4192"/>
<dbReference type="GeneID" id="32807199"/>
<dbReference type="KEGG" id="pen:PSEEN4192"/>
<dbReference type="eggNOG" id="COG0496">
    <property type="taxonomic scope" value="Bacteria"/>
</dbReference>
<dbReference type="HOGENOM" id="CLU_045192_1_2_6"/>
<dbReference type="OrthoDB" id="9780815at2"/>
<dbReference type="Proteomes" id="UP000000658">
    <property type="component" value="Chromosome"/>
</dbReference>
<dbReference type="GO" id="GO:0005737">
    <property type="term" value="C:cytoplasm"/>
    <property type="evidence" value="ECO:0007669"/>
    <property type="project" value="UniProtKB-SubCell"/>
</dbReference>
<dbReference type="GO" id="GO:0008254">
    <property type="term" value="F:3'-nucleotidase activity"/>
    <property type="evidence" value="ECO:0007669"/>
    <property type="project" value="TreeGrafter"/>
</dbReference>
<dbReference type="GO" id="GO:0008253">
    <property type="term" value="F:5'-nucleotidase activity"/>
    <property type="evidence" value="ECO:0007669"/>
    <property type="project" value="UniProtKB-UniRule"/>
</dbReference>
<dbReference type="GO" id="GO:0004309">
    <property type="term" value="F:exopolyphosphatase activity"/>
    <property type="evidence" value="ECO:0007669"/>
    <property type="project" value="TreeGrafter"/>
</dbReference>
<dbReference type="GO" id="GO:0046872">
    <property type="term" value="F:metal ion binding"/>
    <property type="evidence" value="ECO:0007669"/>
    <property type="project" value="UniProtKB-UniRule"/>
</dbReference>
<dbReference type="GO" id="GO:0000166">
    <property type="term" value="F:nucleotide binding"/>
    <property type="evidence" value="ECO:0007669"/>
    <property type="project" value="UniProtKB-KW"/>
</dbReference>
<dbReference type="FunFam" id="3.40.1210.10:FF:000001">
    <property type="entry name" value="5'/3'-nucleotidase SurE"/>
    <property type="match status" value="1"/>
</dbReference>
<dbReference type="Gene3D" id="3.40.1210.10">
    <property type="entry name" value="Survival protein SurE-like phosphatase/nucleotidase"/>
    <property type="match status" value="1"/>
</dbReference>
<dbReference type="HAMAP" id="MF_00060">
    <property type="entry name" value="SurE"/>
    <property type="match status" value="1"/>
</dbReference>
<dbReference type="InterPro" id="IPR030048">
    <property type="entry name" value="SurE"/>
</dbReference>
<dbReference type="InterPro" id="IPR002828">
    <property type="entry name" value="SurE-like_Pase/nucleotidase"/>
</dbReference>
<dbReference type="InterPro" id="IPR036523">
    <property type="entry name" value="SurE-like_sf"/>
</dbReference>
<dbReference type="NCBIfam" id="NF001489">
    <property type="entry name" value="PRK00346.1-3"/>
    <property type="match status" value="1"/>
</dbReference>
<dbReference type="NCBIfam" id="NF001490">
    <property type="entry name" value="PRK00346.1-4"/>
    <property type="match status" value="1"/>
</dbReference>
<dbReference type="NCBIfam" id="TIGR00087">
    <property type="entry name" value="surE"/>
    <property type="match status" value="1"/>
</dbReference>
<dbReference type="PANTHER" id="PTHR30457">
    <property type="entry name" value="5'-NUCLEOTIDASE SURE"/>
    <property type="match status" value="1"/>
</dbReference>
<dbReference type="PANTHER" id="PTHR30457:SF12">
    <property type="entry name" value="5'_3'-NUCLEOTIDASE SURE"/>
    <property type="match status" value="1"/>
</dbReference>
<dbReference type="Pfam" id="PF01975">
    <property type="entry name" value="SurE"/>
    <property type="match status" value="1"/>
</dbReference>
<dbReference type="SUPFAM" id="SSF64167">
    <property type="entry name" value="SurE-like"/>
    <property type="match status" value="1"/>
</dbReference>
<reference key="1">
    <citation type="journal article" date="2006" name="Nat. Biotechnol.">
        <title>Complete genome sequence of the entomopathogenic and metabolically versatile soil bacterium Pseudomonas entomophila.</title>
        <authorList>
            <person name="Vodovar N."/>
            <person name="Vallenet D."/>
            <person name="Cruveiller S."/>
            <person name="Rouy Z."/>
            <person name="Barbe V."/>
            <person name="Acosta C."/>
            <person name="Cattolico L."/>
            <person name="Jubin C."/>
            <person name="Lajus A."/>
            <person name="Segurens B."/>
            <person name="Vacherie B."/>
            <person name="Wincker P."/>
            <person name="Weissenbach J."/>
            <person name="Lemaitre B."/>
            <person name="Medigue C."/>
            <person name="Boccard F."/>
        </authorList>
    </citation>
    <scope>NUCLEOTIDE SEQUENCE [LARGE SCALE GENOMIC DNA]</scope>
    <source>
        <strain>L48</strain>
    </source>
</reference>
<name>SURE_PSEE4</name>
<feature type="chain" id="PRO_1000007769" description="5'-nucleotidase SurE">
    <location>
        <begin position="1"/>
        <end position="249"/>
    </location>
</feature>
<feature type="binding site" evidence="1">
    <location>
        <position position="8"/>
    </location>
    <ligand>
        <name>a divalent metal cation</name>
        <dbReference type="ChEBI" id="CHEBI:60240"/>
    </ligand>
</feature>
<feature type="binding site" evidence="1">
    <location>
        <position position="9"/>
    </location>
    <ligand>
        <name>a divalent metal cation</name>
        <dbReference type="ChEBI" id="CHEBI:60240"/>
    </ligand>
</feature>
<feature type="binding site" evidence="1">
    <location>
        <position position="39"/>
    </location>
    <ligand>
        <name>a divalent metal cation</name>
        <dbReference type="ChEBI" id="CHEBI:60240"/>
    </ligand>
</feature>
<feature type="binding site" evidence="1">
    <location>
        <position position="91"/>
    </location>
    <ligand>
        <name>a divalent metal cation</name>
        <dbReference type="ChEBI" id="CHEBI:60240"/>
    </ligand>
</feature>
<gene>
    <name evidence="1" type="primary">surE</name>
    <name type="ordered locus">PSEEN4192</name>
</gene>